<accession>Q5R9X9</accession>
<evidence type="ECO:0000250" key="1">
    <source>
        <dbReference type="UniProtKB" id="Q7L8J4"/>
    </source>
</evidence>
<evidence type="ECO:0000250" key="2">
    <source>
        <dbReference type="UniProtKB" id="Q99LH9"/>
    </source>
</evidence>
<evidence type="ECO:0000255" key="3"/>
<evidence type="ECO:0000256" key="4">
    <source>
        <dbReference type="SAM" id="MobiDB-lite"/>
    </source>
</evidence>
<evidence type="ECO:0000305" key="5"/>
<reference key="1">
    <citation type="submission" date="2004-11" db="EMBL/GenBank/DDBJ databases">
        <authorList>
            <consortium name="The German cDNA consortium"/>
        </authorList>
    </citation>
    <scope>NUCLEOTIDE SEQUENCE [LARGE SCALE MRNA]</scope>
    <source>
        <tissue>Brain cortex</tissue>
    </source>
</reference>
<keyword id="KW-0175">Coiled coil</keyword>
<keyword id="KW-0344">Guanine-nucleotide releasing factor</keyword>
<keyword id="KW-0597">Phosphoprotein</keyword>
<keyword id="KW-1185">Reference proteome</keyword>
<gene>
    <name type="primary">SH3BP5L</name>
</gene>
<proteinExistence type="evidence at transcript level"/>
<name>3BP5L_PONAB</name>
<comment type="function">
    <text evidence="1">Functions as a guanine nucleotide exchange factor (GEF) for RAB11A.</text>
</comment>
<comment type="similarity">
    <text evidence="5">Belongs to the SH3BP5 family.</text>
</comment>
<organism>
    <name type="scientific">Pongo abelii</name>
    <name type="common">Sumatran orangutan</name>
    <name type="synonym">Pongo pygmaeus abelii</name>
    <dbReference type="NCBI Taxonomy" id="9601"/>
    <lineage>
        <taxon>Eukaryota</taxon>
        <taxon>Metazoa</taxon>
        <taxon>Chordata</taxon>
        <taxon>Craniata</taxon>
        <taxon>Vertebrata</taxon>
        <taxon>Euteleostomi</taxon>
        <taxon>Mammalia</taxon>
        <taxon>Eutheria</taxon>
        <taxon>Euarchontoglires</taxon>
        <taxon>Primates</taxon>
        <taxon>Haplorrhini</taxon>
        <taxon>Catarrhini</taxon>
        <taxon>Hominidae</taxon>
        <taxon>Pongo</taxon>
    </lineage>
</organism>
<feature type="chain" id="PRO_0000317510" description="SH3 domain-binding protein 5-like">
    <location>
        <begin position="1"/>
        <end position="393"/>
    </location>
</feature>
<feature type="region of interest" description="Disordered" evidence="4">
    <location>
        <begin position="1"/>
        <end position="59"/>
    </location>
</feature>
<feature type="region of interest" description="Disordered" evidence="4">
    <location>
        <begin position="272"/>
        <end position="332"/>
    </location>
</feature>
<feature type="region of interest" description="Disordered" evidence="4">
    <location>
        <begin position="364"/>
        <end position="393"/>
    </location>
</feature>
<feature type="coiled-coil region" evidence="3">
    <location>
        <begin position="59"/>
        <end position="140"/>
    </location>
</feature>
<feature type="coiled-coil region" evidence="3">
    <location>
        <begin position="169"/>
        <end position="272"/>
    </location>
</feature>
<feature type="compositionally biased region" description="Basic and acidic residues" evidence="4">
    <location>
        <begin position="18"/>
        <end position="28"/>
    </location>
</feature>
<feature type="compositionally biased region" description="Gly residues" evidence="4">
    <location>
        <begin position="304"/>
        <end position="313"/>
    </location>
</feature>
<feature type="compositionally biased region" description="Low complexity" evidence="4">
    <location>
        <begin position="317"/>
        <end position="332"/>
    </location>
</feature>
<feature type="compositionally biased region" description="Basic residues" evidence="4">
    <location>
        <begin position="384"/>
        <end position="393"/>
    </location>
</feature>
<feature type="modified residue" description="Phosphothreonine" evidence="1">
    <location>
        <position position="13"/>
    </location>
</feature>
<feature type="modified residue" description="Phosphoserine" evidence="1">
    <location>
        <position position="30"/>
    </location>
</feature>
<feature type="modified residue" description="Phosphoserine" evidence="2">
    <location>
        <position position="49"/>
    </location>
</feature>
<feature type="modified residue" description="Phosphoserine" evidence="1">
    <location>
        <position position="343"/>
    </location>
</feature>
<feature type="modified residue" description="Phosphoserine" evidence="1">
    <location>
        <position position="350"/>
    </location>
</feature>
<feature type="modified residue" description="Phosphoserine" evidence="1">
    <location>
        <position position="358"/>
    </location>
</feature>
<feature type="modified residue" description="Phosphoserine" evidence="1">
    <location>
        <position position="362"/>
    </location>
</feature>
<feature type="modified residue" description="Phosphoserine" evidence="2">
    <location>
        <position position="378"/>
    </location>
</feature>
<protein>
    <recommendedName>
        <fullName>SH3 domain-binding protein 5-like</fullName>
        <shortName>SH3BP-5-like</shortName>
    </recommendedName>
</protein>
<sequence length="393" mass="43449">MAELRQVPGGRETPQGELRPEVVEDEVPRSPVAEEPGGGGSSSSEAKLSPREEEELDPRIQEELEHLNQASEEINQVELQLDEARTTYRRILQESARKLNTQGSHLGSCIEKARPYYEARRLAKEAQQETQKAALRYERAVSMHNAAREMVLVAEQGVMADKNRLDPTWQEMLNHATCKVNEAEEERLRGEREHQRVTRLCQQAEARVQALQKTLRRAIGKSRPYFELKAQFSQILEEHKAKVTELEQQVAQAKTRYSVALRNLEQISEQIHARRRGDLPPHPLGPRRSSPVGAEAGPEDTGDGDSGIEGAEGAGLEEGSSLGPGPAPDTDTLSLLSLRTVASDLQKCDSVEHLRGLSDHVSLDGQELGTRSGGRRGSDGGVRGGRHQRSVSL</sequence>
<dbReference type="EMBL" id="CR859251">
    <property type="protein sequence ID" value="CAH91431.1"/>
    <property type="molecule type" value="mRNA"/>
</dbReference>
<dbReference type="RefSeq" id="NP_001125840.1">
    <property type="nucleotide sequence ID" value="NM_001132368.2"/>
</dbReference>
<dbReference type="SMR" id="Q5R9X9"/>
<dbReference type="FunCoup" id="Q5R9X9">
    <property type="interactions" value="1802"/>
</dbReference>
<dbReference type="STRING" id="9601.ENSPPYP00000000006"/>
<dbReference type="GeneID" id="100172769"/>
<dbReference type="KEGG" id="pon:100172769"/>
<dbReference type="CTD" id="80851"/>
<dbReference type="eggNOG" id="KOG2008">
    <property type="taxonomic scope" value="Eukaryota"/>
</dbReference>
<dbReference type="InParanoid" id="Q5R9X9"/>
<dbReference type="OrthoDB" id="446789at2759"/>
<dbReference type="Proteomes" id="UP000001595">
    <property type="component" value="Unplaced"/>
</dbReference>
<dbReference type="GO" id="GO:0005737">
    <property type="term" value="C:cytoplasm"/>
    <property type="evidence" value="ECO:0007669"/>
    <property type="project" value="TreeGrafter"/>
</dbReference>
<dbReference type="GO" id="GO:0005085">
    <property type="term" value="F:guanyl-nucleotide exchange factor activity"/>
    <property type="evidence" value="ECO:0000250"/>
    <property type="project" value="UniProtKB"/>
</dbReference>
<dbReference type="GO" id="GO:0004860">
    <property type="term" value="F:protein kinase inhibitor activity"/>
    <property type="evidence" value="ECO:0007669"/>
    <property type="project" value="TreeGrafter"/>
</dbReference>
<dbReference type="GO" id="GO:0035556">
    <property type="term" value="P:intracellular signal transduction"/>
    <property type="evidence" value="ECO:0007669"/>
    <property type="project" value="InterPro"/>
</dbReference>
<dbReference type="InterPro" id="IPR007940">
    <property type="entry name" value="SH3BP5"/>
</dbReference>
<dbReference type="PANTHER" id="PTHR19423">
    <property type="entry name" value="SH3 DOMAIN-BINDING PROTEIN 5"/>
    <property type="match status" value="1"/>
</dbReference>
<dbReference type="PANTHER" id="PTHR19423:SF8">
    <property type="entry name" value="SH3 DOMAIN-BINDING PROTEIN 5-LIKE"/>
    <property type="match status" value="1"/>
</dbReference>
<dbReference type="Pfam" id="PF05276">
    <property type="entry name" value="SH3BP5"/>
    <property type="match status" value="1"/>
</dbReference>